<comment type="subcellular location">
    <subcellularLocation>
        <location evidence="2">Membrane</location>
        <topology evidence="2">Multi-pass membrane protein</topology>
    </subcellularLocation>
</comment>
<feature type="chain" id="PRO_0000116570" description="Uncharacterized protein C56F8.12">
    <location>
        <begin position="1"/>
        <end position="394"/>
    </location>
</feature>
<feature type="transmembrane region" description="Helical" evidence="1">
    <location>
        <begin position="64"/>
        <end position="84"/>
    </location>
</feature>
<feature type="transmembrane region" description="Helical" evidence="1">
    <location>
        <begin position="101"/>
        <end position="121"/>
    </location>
</feature>
<feature type="transmembrane region" description="Helical" evidence="1">
    <location>
        <begin position="133"/>
        <end position="153"/>
    </location>
</feature>
<feature type="transmembrane region" description="Helical" evidence="1">
    <location>
        <begin position="180"/>
        <end position="200"/>
    </location>
</feature>
<feature type="transmembrane region" description="Helical" evidence="1">
    <location>
        <begin position="228"/>
        <end position="248"/>
    </location>
</feature>
<feature type="transmembrane region" description="Helical" evidence="1">
    <location>
        <begin position="256"/>
        <end position="276"/>
    </location>
</feature>
<feature type="transmembrane region" description="Helical" evidence="1">
    <location>
        <begin position="291"/>
        <end position="311"/>
    </location>
</feature>
<feature type="glycosylation site" description="N-linked (GlcNAc...) asparagine" evidence="1">
    <location>
        <position position="3"/>
    </location>
</feature>
<feature type="glycosylation site" description="N-linked (GlcNAc...) asparagine" evidence="1">
    <location>
        <position position="14"/>
    </location>
</feature>
<feature type="glycosylation site" description="N-linked (GlcNAc...) asparagine" evidence="1">
    <location>
        <position position="20"/>
    </location>
</feature>
<feature type="glycosylation site" description="N-linked (GlcNAc...) asparagine" evidence="1">
    <location>
        <position position="25"/>
    </location>
</feature>
<feature type="glycosylation site" description="N-linked (GlcNAc...) asparagine" evidence="1">
    <location>
        <position position="283"/>
    </location>
</feature>
<feature type="glycosylation site" description="N-linked (GlcNAc...) asparagine" evidence="1">
    <location>
        <position position="286"/>
    </location>
</feature>
<feature type="glycosylation site" description="N-linked (GlcNAc...) asparagine" evidence="1">
    <location>
        <position position="344"/>
    </location>
</feature>
<protein>
    <recommendedName>
        <fullName>Uncharacterized protein C56F8.12</fullName>
    </recommendedName>
</protein>
<sequence length="394" mass="44586">MMNDSQVQLFQLYNYSVYSNGTISNFTNCYLINDEHTPIIESDGMIYNGQSCDSPVKSLASHGAVGIVTACFCFFLIPLLLVNIAKYWKGKPPLLKRRMEFIWITLLILALAVGGFAYIDVDRNLVQGAAMKIFSFTFQTALPISIAIIWHVISTYGFALYRQRIVVGKHAAHFSLDHWIFVVEYYAPIVFYVFNLMGFFLAALHPWTKVVRGDGNAATDGRFKASSVLLAIAWVFACAMFIVYSFVYKLDRRGRWVGMVIMMISILPRIVYQFLETWSFTLNASNVSVNAGLVFGLGFCPPLILAYTVCIYGWAVPSIAELEKEAIHEECRQRKRRTTISRDNSTRSTWGIGSEHDMQCLPPSYETMGPCEKEMKEETNEVEIASIESGEVRE</sequence>
<accession>Q10260</accession>
<keyword id="KW-0325">Glycoprotein</keyword>
<keyword id="KW-0472">Membrane</keyword>
<keyword id="KW-1185">Reference proteome</keyword>
<keyword id="KW-0812">Transmembrane</keyword>
<keyword id="KW-1133">Transmembrane helix</keyword>
<reference key="1">
    <citation type="journal article" date="2002" name="Nature">
        <title>The genome sequence of Schizosaccharomyces pombe.</title>
        <authorList>
            <person name="Wood V."/>
            <person name="Gwilliam R."/>
            <person name="Rajandream M.A."/>
            <person name="Lyne M.H."/>
            <person name="Lyne R."/>
            <person name="Stewart A."/>
            <person name="Sgouros J.G."/>
            <person name="Peat N."/>
            <person name="Hayles J."/>
            <person name="Baker S.G."/>
            <person name="Basham D."/>
            <person name="Bowman S."/>
            <person name="Brooks K."/>
            <person name="Brown D."/>
            <person name="Brown S."/>
            <person name="Chillingworth T."/>
            <person name="Churcher C.M."/>
            <person name="Collins M."/>
            <person name="Connor R."/>
            <person name="Cronin A."/>
            <person name="Davis P."/>
            <person name="Feltwell T."/>
            <person name="Fraser A."/>
            <person name="Gentles S."/>
            <person name="Goble A."/>
            <person name="Hamlin N."/>
            <person name="Harris D.E."/>
            <person name="Hidalgo J."/>
            <person name="Hodgson G."/>
            <person name="Holroyd S."/>
            <person name="Hornsby T."/>
            <person name="Howarth S."/>
            <person name="Huckle E.J."/>
            <person name="Hunt S."/>
            <person name="Jagels K."/>
            <person name="James K.D."/>
            <person name="Jones L."/>
            <person name="Jones M."/>
            <person name="Leather S."/>
            <person name="McDonald S."/>
            <person name="McLean J."/>
            <person name="Mooney P."/>
            <person name="Moule S."/>
            <person name="Mungall K.L."/>
            <person name="Murphy L.D."/>
            <person name="Niblett D."/>
            <person name="Odell C."/>
            <person name="Oliver K."/>
            <person name="O'Neil S."/>
            <person name="Pearson D."/>
            <person name="Quail M.A."/>
            <person name="Rabbinowitsch E."/>
            <person name="Rutherford K.M."/>
            <person name="Rutter S."/>
            <person name="Saunders D."/>
            <person name="Seeger K."/>
            <person name="Sharp S."/>
            <person name="Skelton J."/>
            <person name="Simmonds M.N."/>
            <person name="Squares R."/>
            <person name="Squares S."/>
            <person name="Stevens K."/>
            <person name="Taylor K."/>
            <person name="Taylor R.G."/>
            <person name="Tivey A."/>
            <person name="Walsh S.V."/>
            <person name="Warren T."/>
            <person name="Whitehead S."/>
            <person name="Woodward J.R."/>
            <person name="Volckaert G."/>
            <person name="Aert R."/>
            <person name="Robben J."/>
            <person name="Grymonprez B."/>
            <person name="Weltjens I."/>
            <person name="Vanstreels E."/>
            <person name="Rieger M."/>
            <person name="Schaefer M."/>
            <person name="Mueller-Auer S."/>
            <person name="Gabel C."/>
            <person name="Fuchs M."/>
            <person name="Duesterhoeft A."/>
            <person name="Fritzc C."/>
            <person name="Holzer E."/>
            <person name="Moestl D."/>
            <person name="Hilbert H."/>
            <person name="Borzym K."/>
            <person name="Langer I."/>
            <person name="Beck A."/>
            <person name="Lehrach H."/>
            <person name="Reinhardt R."/>
            <person name="Pohl T.M."/>
            <person name="Eger P."/>
            <person name="Zimmermann W."/>
            <person name="Wedler H."/>
            <person name="Wambutt R."/>
            <person name="Purnelle B."/>
            <person name="Goffeau A."/>
            <person name="Cadieu E."/>
            <person name="Dreano S."/>
            <person name="Gloux S."/>
            <person name="Lelaure V."/>
            <person name="Mottier S."/>
            <person name="Galibert F."/>
            <person name="Aves S.J."/>
            <person name="Xiang Z."/>
            <person name="Hunt C."/>
            <person name="Moore K."/>
            <person name="Hurst S.M."/>
            <person name="Lucas M."/>
            <person name="Rochet M."/>
            <person name="Gaillardin C."/>
            <person name="Tallada V.A."/>
            <person name="Garzon A."/>
            <person name="Thode G."/>
            <person name="Daga R.R."/>
            <person name="Cruzado L."/>
            <person name="Jimenez J."/>
            <person name="Sanchez M."/>
            <person name="del Rey F."/>
            <person name="Benito J."/>
            <person name="Dominguez A."/>
            <person name="Revuelta J.L."/>
            <person name="Moreno S."/>
            <person name="Armstrong J."/>
            <person name="Forsburg S.L."/>
            <person name="Cerutti L."/>
            <person name="Lowe T."/>
            <person name="McCombie W.R."/>
            <person name="Paulsen I."/>
            <person name="Potashkin J."/>
            <person name="Shpakovski G.V."/>
            <person name="Ussery D."/>
            <person name="Barrell B.G."/>
            <person name="Nurse P."/>
        </authorList>
    </citation>
    <scope>NUCLEOTIDE SEQUENCE [LARGE SCALE GENOMIC DNA]</scope>
    <source>
        <strain>972 / ATCC 24843</strain>
    </source>
</reference>
<gene>
    <name type="ORF">SPAC56F8.12</name>
</gene>
<name>YD2C_SCHPO</name>
<organism>
    <name type="scientific">Schizosaccharomyces pombe (strain 972 / ATCC 24843)</name>
    <name type="common">Fission yeast</name>
    <dbReference type="NCBI Taxonomy" id="284812"/>
    <lineage>
        <taxon>Eukaryota</taxon>
        <taxon>Fungi</taxon>
        <taxon>Dikarya</taxon>
        <taxon>Ascomycota</taxon>
        <taxon>Taphrinomycotina</taxon>
        <taxon>Schizosaccharomycetes</taxon>
        <taxon>Schizosaccharomycetales</taxon>
        <taxon>Schizosaccharomycetaceae</taxon>
        <taxon>Schizosaccharomyces</taxon>
    </lineage>
</organism>
<evidence type="ECO:0000255" key="1"/>
<evidence type="ECO:0000305" key="2"/>
<proteinExistence type="predicted"/>
<dbReference type="EMBL" id="CU329670">
    <property type="protein sequence ID" value="CAA93583.1"/>
    <property type="molecule type" value="Genomic_DNA"/>
</dbReference>
<dbReference type="PIR" id="T38922">
    <property type="entry name" value="T38922"/>
</dbReference>
<dbReference type="RefSeq" id="NP_593226.1">
    <property type="nucleotide sequence ID" value="NM_001018623.2"/>
</dbReference>
<dbReference type="BioGRID" id="279749">
    <property type="interactions" value="5"/>
</dbReference>
<dbReference type="STRING" id="284812.Q10260"/>
<dbReference type="PaxDb" id="4896-SPAC56F8.12.1"/>
<dbReference type="EnsemblFungi" id="SPAC56F8.12.1">
    <property type="protein sequence ID" value="SPAC56F8.12.1:pep"/>
    <property type="gene ID" value="SPAC56F8.12"/>
</dbReference>
<dbReference type="KEGG" id="spo:2543326"/>
<dbReference type="PomBase" id="SPAC56F8.12"/>
<dbReference type="VEuPathDB" id="FungiDB:SPAC56F8.12"/>
<dbReference type="eggNOG" id="ENOG502QWQE">
    <property type="taxonomic scope" value="Eukaryota"/>
</dbReference>
<dbReference type="HOGENOM" id="CLU_689186_0_0_1"/>
<dbReference type="InParanoid" id="Q10260"/>
<dbReference type="OMA" id="WLPLWFY"/>
<dbReference type="PhylomeDB" id="Q10260"/>
<dbReference type="PRO" id="PR:Q10260"/>
<dbReference type="Proteomes" id="UP000002485">
    <property type="component" value="Chromosome I"/>
</dbReference>
<dbReference type="GO" id="GO:0005794">
    <property type="term" value="C:Golgi apparatus"/>
    <property type="evidence" value="ECO:0007005"/>
    <property type="project" value="PomBase"/>
</dbReference>
<dbReference type="GO" id="GO:0016020">
    <property type="term" value="C:membrane"/>
    <property type="evidence" value="ECO:0007669"/>
    <property type="project" value="UniProtKB-SubCell"/>
</dbReference>
<dbReference type="InterPro" id="IPR018830">
    <property type="entry name" value="DUF2434"/>
</dbReference>
<dbReference type="Pfam" id="PF10361">
    <property type="entry name" value="DUF2434"/>
    <property type="match status" value="1"/>
</dbReference>